<sequence>MTRILGIDPGSQRTGIGIIDIDEDGRSRHVHHAPLMLLGEGDFSQRLKRLLQGLGELIETYRPDEVAIERVFMGKSAASALKLGHARGAAICAVVMRDLPVHEYAATEVKLALVGKGGADKVQVQHMVGIMLNLKGKLQPDAADALAVAITHAHVRATAQRLGVNTQQAWSRKK</sequence>
<comment type="function">
    <text evidence="1">The RuvA-RuvB-RuvC complex processes Holliday junction (HJ) DNA during genetic recombination and DNA repair. Endonuclease that resolves HJ intermediates. Cleaves cruciform DNA by making single-stranded nicks across the HJ at symmetrical positions within the homologous arms, yielding a 5'-phosphate and a 3'-hydroxyl group; requires a central core of homology in the junction. The consensus cleavage sequence is 5'-(A/T)TT(C/G)-3'. Cleavage occurs on the 3'-side of the TT dinucleotide at the point of strand exchange. HJ branch migration catalyzed by RuvA-RuvB allows RuvC to scan DNA until it finds its consensus sequence, where it cleaves and resolves the cruciform DNA.</text>
</comment>
<comment type="catalytic activity">
    <reaction evidence="1">
        <text>Endonucleolytic cleavage at a junction such as a reciprocal single-stranded crossover between two homologous DNA duplexes (Holliday junction).</text>
        <dbReference type="EC" id="3.1.21.10"/>
    </reaction>
</comment>
<comment type="cofactor">
    <cofactor evidence="1">
        <name>Mg(2+)</name>
        <dbReference type="ChEBI" id="CHEBI:18420"/>
    </cofactor>
    <text evidence="1">Binds 2 Mg(2+) ion per subunit.</text>
</comment>
<comment type="subunit">
    <text evidence="1">Homodimer which binds Holliday junction (HJ) DNA. The HJ becomes 2-fold symmetrical on binding to RuvC with unstacked arms; it has a different conformation from HJ DNA in complex with RuvA. In the full resolvosome a probable DNA-RuvA(4)-RuvB(12)-RuvC(2) complex forms which resolves the HJ.</text>
</comment>
<comment type="subcellular location">
    <subcellularLocation>
        <location evidence="1">Cytoplasm</location>
    </subcellularLocation>
</comment>
<comment type="similarity">
    <text evidence="1">Belongs to the RuvC family.</text>
</comment>
<dbReference type="EC" id="3.1.21.10" evidence="1"/>
<dbReference type="EMBL" id="AM039952">
    <property type="protein sequence ID" value="CAJ25012.1"/>
    <property type="molecule type" value="Genomic_DNA"/>
</dbReference>
<dbReference type="RefSeq" id="WP_011348275.1">
    <property type="nucleotide sequence ID" value="NZ_CP017190.1"/>
</dbReference>
<dbReference type="SMR" id="Q3BQF1"/>
<dbReference type="STRING" id="456327.BJD11_06360"/>
<dbReference type="GeneID" id="97511407"/>
<dbReference type="KEGG" id="xcv:XCV3281"/>
<dbReference type="eggNOG" id="COG0817">
    <property type="taxonomic scope" value="Bacteria"/>
</dbReference>
<dbReference type="HOGENOM" id="CLU_091257_2_1_6"/>
<dbReference type="Proteomes" id="UP000007069">
    <property type="component" value="Chromosome"/>
</dbReference>
<dbReference type="GO" id="GO:0005737">
    <property type="term" value="C:cytoplasm"/>
    <property type="evidence" value="ECO:0007669"/>
    <property type="project" value="UniProtKB-SubCell"/>
</dbReference>
<dbReference type="GO" id="GO:0048476">
    <property type="term" value="C:Holliday junction resolvase complex"/>
    <property type="evidence" value="ECO:0007669"/>
    <property type="project" value="UniProtKB-UniRule"/>
</dbReference>
<dbReference type="GO" id="GO:0008821">
    <property type="term" value="F:crossover junction DNA endonuclease activity"/>
    <property type="evidence" value="ECO:0007669"/>
    <property type="project" value="UniProtKB-UniRule"/>
</dbReference>
<dbReference type="GO" id="GO:0003677">
    <property type="term" value="F:DNA binding"/>
    <property type="evidence" value="ECO:0007669"/>
    <property type="project" value="UniProtKB-KW"/>
</dbReference>
<dbReference type="GO" id="GO:0000287">
    <property type="term" value="F:magnesium ion binding"/>
    <property type="evidence" value="ECO:0007669"/>
    <property type="project" value="UniProtKB-UniRule"/>
</dbReference>
<dbReference type="GO" id="GO:0006310">
    <property type="term" value="P:DNA recombination"/>
    <property type="evidence" value="ECO:0007669"/>
    <property type="project" value="UniProtKB-UniRule"/>
</dbReference>
<dbReference type="GO" id="GO:0006281">
    <property type="term" value="P:DNA repair"/>
    <property type="evidence" value="ECO:0007669"/>
    <property type="project" value="UniProtKB-UniRule"/>
</dbReference>
<dbReference type="CDD" id="cd16962">
    <property type="entry name" value="RuvC"/>
    <property type="match status" value="1"/>
</dbReference>
<dbReference type="FunFam" id="3.30.420.10:FF:000002">
    <property type="entry name" value="Crossover junction endodeoxyribonuclease RuvC"/>
    <property type="match status" value="1"/>
</dbReference>
<dbReference type="Gene3D" id="3.30.420.10">
    <property type="entry name" value="Ribonuclease H-like superfamily/Ribonuclease H"/>
    <property type="match status" value="1"/>
</dbReference>
<dbReference type="HAMAP" id="MF_00034">
    <property type="entry name" value="RuvC"/>
    <property type="match status" value="1"/>
</dbReference>
<dbReference type="InterPro" id="IPR012337">
    <property type="entry name" value="RNaseH-like_sf"/>
</dbReference>
<dbReference type="InterPro" id="IPR036397">
    <property type="entry name" value="RNaseH_sf"/>
</dbReference>
<dbReference type="InterPro" id="IPR020563">
    <property type="entry name" value="X-over_junc_endoDNase_Mg_BS"/>
</dbReference>
<dbReference type="InterPro" id="IPR002176">
    <property type="entry name" value="X-over_junc_endoDNase_RuvC"/>
</dbReference>
<dbReference type="NCBIfam" id="TIGR00228">
    <property type="entry name" value="ruvC"/>
    <property type="match status" value="1"/>
</dbReference>
<dbReference type="PANTHER" id="PTHR30194">
    <property type="entry name" value="CROSSOVER JUNCTION ENDODEOXYRIBONUCLEASE RUVC"/>
    <property type="match status" value="1"/>
</dbReference>
<dbReference type="PANTHER" id="PTHR30194:SF3">
    <property type="entry name" value="CROSSOVER JUNCTION ENDODEOXYRIBONUCLEASE RUVC"/>
    <property type="match status" value="1"/>
</dbReference>
<dbReference type="Pfam" id="PF02075">
    <property type="entry name" value="RuvC"/>
    <property type="match status" value="1"/>
</dbReference>
<dbReference type="PRINTS" id="PR00696">
    <property type="entry name" value="RSOLVASERUVC"/>
</dbReference>
<dbReference type="SUPFAM" id="SSF53098">
    <property type="entry name" value="Ribonuclease H-like"/>
    <property type="match status" value="1"/>
</dbReference>
<dbReference type="PROSITE" id="PS01321">
    <property type="entry name" value="RUVC"/>
    <property type="match status" value="1"/>
</dbReference>
<organism>
    <name type="scientific">Xanthomonas euvesicatoria pv. vesicatoria (strain 85-10)</name>
    <name type="common">Xanthomonas campestris pv. vesicatoria</name>
    <dbReference type="NCBI Taxonomy" id="316273"/>
    <lineage>
        <taxon>Bacteria</taxon>
        <taxon>Pseudomonadati</taxon>
        <taxon>Pseudomonadota</taxon>
        <taxon>Gammaproteobacteria</taxon>
        <taxon>Lysobacterales</taxon>
        <taxon>Lysobacteraceae</taxon>
        <taxon>Xanthomonas</taxon>
    </lineage>
</organism>
<protein>
    <recommendedName>
        <fullName evidence="1">Crossover junction endodeoxyribonuclease RuvC</fullName>
        <ecNumber evidence="1">3.1.21.10</ecNumber>
    </recommendedName>
    <alternativeName>
        <fullName evidence="1">Holliday junction nuclease RuvC</fullName>
    </alternativeName>
    <alternativeName>
        <fullName evidence="1">Holliday junction resolvase RuvC</fullName>
    </alternativeName>
</protein>
<keyword id="KW-0963">Cytoplasm</keyword>
<keyword id="KW-0227">DNA damage</keyword>
<keyword id="KW-0233">DNA recombination</keyword>
<keyword id="KW-0234">DNA repair</keyword>
<keyword id="KW-0238">DNA-binding</keyword>
<keyword id="KW-0255">Endonuclease</keyword>
<keyword id="KW-0378">Hydrolase</keyword>
<keyword id="KW-0460">Magnesium</keyword>
<keyword id="KW-0479">Metal-binding</keyword>
<keyword id="KW-0540">Nuclease</keyword>
<proteinExistence type="inferred from homology"/>
<evidence type="ECO:0000255" key="1">
    <source>
        <dbReference type="HAMAP-Rule" id="MF_00034"/>
    </source>
</evidence>
<name>RUVC_XANE5</name>
<gene>
    <name evidence="1" type="primary">ruvC</name>
    <name type="ordered locus">XCV3281</name>
</gene>
<reference key="1">
    <citation type="journal article" date="2005" name="J. Bacteriol.">
        <title>Insights into genome plasticity and pathogenicity of the plant pathogenic Bacterium Xanthomonas campestris pv. vesicatoria revealed by the complete genome sequence.</title>
        <authorList>
            <person name="Thieme F."/>
            <person name="Koebnik R."/>
            <person name="Bekel T."/>
            <person name="Berger C."/>
            <person name="Boch J."/>
            <person name="Buettner D."/>
            <person name="Caldana C."/>
            <person name="Gaigalat L."/>
            <person name="Goesmann A."/>
            <person name="Kay S."/>
            <person name="Kirchner O."/>
            <person name="Lanz C."/>
            <person name="Linke B."/>
            <person name="McHardy A.C."/>
            <person name="Meyer F."/>
            <person name="Mittenhuber G."/>
            <person name="Nies D.H."/>
            <person name="Niesbach-Kloesgen U."/>
            <person name="Patschkowski T."/>
            <person name="Rueckert C."/>
            <person name="Rupp O."/>
            <person name="Schneiker S."/>
            <person name="Schuster S.C."/>
            <person name="Vorhoelter F.J."/>
            <person name="Weber E."/>
            <person name="Puehler A."/>
            <person name="Bonas U."/>
            <person name="Bartels D."/>
            <person name="Kaiser O."/>
        </authorList>
    </citation>
    <scope>NUCLEOTIDE SEQUENCE [LARGE SCALE GENOMIC DNA]</scope>
    <source>
        <strain>85-10</strain>
    </source>
</reference>
<feature type="chain" id="PRO_0000225189" description="Crossover junction endodeoxyribonuclease RuvC">
    <location>
        <begin position="1"/>
        <end position="174"/>
    </location>
</feature>
<feature type="active site" evidence="1">
    <location>
        <position position="8"/>
    </location>
</feature>
<feature type="active site" evidence="1">
    <location>
        <position position="69"/>
    </location>
</feature>
<feature type="active site" evidence="1">
    <location>
        <position position="141"/>
    </location>
</feature>
<feature type="binding site" evidence="1">
    <location>
        <position position="8"/>
    </location>
    <ligand>
        <name>Mg(2+)</name>
        <dbReference type="ChEBI" id="CHEBI:18420"/>
        <label>1</label>
    </ligand>
</feature>
<feature type="binding site" evidence="1">
    <location>
        <position position="69"/>
    </location>
    <ligand>
        <name>Mg(2+)</name>
        <dbReference type="ChEBI" id="CHEBI:18420"/>
        <label>2</label>
    </ligand>
</feature>
<feature type="binding site" evidence="1">
    <location>
        <position position="141"/>
    </location>
    <ligand>
        <name>Mg(2+)</name>
        <dbReference type="ChEBI" id="CHEBI:18420"/>
        <label>1</label>
    </ligand>
</feature>
<accession>Q3BQF1</accession>